<proteinExistence type="inferred from homology"/>
<keyword id="KW-0030">Aminoacyl-tRNA synthetase</keyword>
<keyword id="KW-0067">ATP-binding</keyword>
<keyword id="KW-0963">Cytoplasm</keyword>
<keyword id="KW-0436">Ligase</keyword>
<keyword id="KW-0479">Metal-binding</keyword>
<keyword id="KW-0547">Nucleotide-binding</keyword>
<keyword id="KW-0648">Protein biosynthesis</keyword>
<keyword id="KW-0694">RNA-binding</keyword>
<keyword id="KW-0820">tRNA-binding</keyword>
<keyword id="KW-0862">Zinc</keyword>
<comment type="function">
    <text evidence="1">Is required not only for elongation of protein synthesis but also for the initiation of all mRNA translation through initiator tRNA(fMet) aminoacylation.</text>
</comment>
<comment type="catalytic activity">
    <reaction evidence="1">
        <text>tRNA(Met) + L-methionine + ATP = L-methionyl-tRNA(Met) + AMP + diphosphate</text>
        <dbReference type="Rhea" id="RHEA:13481"/>
        <dbReference type="Rhea" id="RHEA-COMP:9667"/>
        <dbReference type="Rhea" id="RHEA-COMP:9698"/>
        <dbReference type="ChEBI" id="CHEBI:30616"/>
        <dbReference type="ChEBI" id="CHEBI:33019"/>
        <dbReference type="ChEBI" id="CHEBI:57844"/>
        <dbReference type="ChEBI" id="CHEBI:78442"/>
        <dbReference type="ChEBI" id="CHEBI:78530"/>
        <dbReference type="ChEBI" id="CHEBI:456215"/>
        <dbReference type="EC" id="6.1.1.10"/>
    </reaction>
</comment>
<comment type="cofactor">
    <cofactor evidence="1">
        <name>Zn(2+)</name>
        <dbReference type="ChEBI" id="CHEBI:29105"/>
    </cofactor>
    <text evidence="1">Binds 1 zinc ion per subunit.</text>
</comment>
<comment type="subunit">
    <text evidence="1">Homodimer.</text>
</comment>
<comment type="subcellular location">
    <subcellularLocation>
        <location evidence="1">Cytoplasm</location>
    </subcellularLocation>
</comment>
<comment type="similarity">
    <text evidence="1">Belongs to the class-I aminoacyl-tRNA synthetase family. MetG type 1 subfamily.</text>
</comment>
<reference key="1">
    <citation type="journal article" date="1998" name="DNA Res.">
        <title>Complete sequence and gene organization of the genome of a hyper-thermophilic archaebacterium, Pyrococcus horikoshii OT3.</title>
        <authorList>
            <person name="Kawarabayasi Y."/>
            <person name="Sawada M."/>
            <person name="Horikawa H."/>
            <person name="Haikawa Y."/>
            <person name="Hino Y."/>
            <person name="Yamamoto S."/>
            <person name="Sekine M."/>
            <person name="Baba S."/>
            <person name="Kosugi H."/>
            <person name="Hosoyama A."/>
            <person name="Nagai Y."/>
            <person name="Sakai M."/>
            <person name="Ogura K."/>
            <person name="Otsuka R."/>
            <person name="Nakazawa H."/>
            <person name="Takamiya M."/>
            <person name="Ohfuku Y."/>
            <person name="Funahashi T."/>
            <person name="Tanaka T."/>
            <person name="Kudoh Y."/>
            <person name="Yamazaki J."/>
            <person name="Kushida N."/>
            <person name="Oguchi A."/>
            <person name="Aoki K."/>
            <person name="Yoshizawa T."/>
            <person name="Nakamura Y."/>
            <person name="Robb F.T."/>
            <person name="Horikoshi K."/>
            <person name="Masuchi Y."/>
            <person name="Shizuya H."/>
            <person name="Kikuchi H."/>
        </authorList>
    </citation>
    <scope>NUCLEOTIDE SEQUENCE [LARGE SCALE GENOMIC DNA]</scope>
    <source>
        <strain>ATCC 700860 / DSM 12428 / JCM 9974 / NBRC 100139 / OT-3</strain>
    </source>
</reference>
<gene>
    <name evidence="1" type="primary">metG</name>
    <name type="ordered locus">PH0993</name>
</gene>
<dbReference type="EC" id="6.1.1.10" evidence="1"/>
<dbReference type="EMBL" id="BA000001">
    <property type="protein sequence ID" value="BAA30090.1"/>
    <property type="molecule type" value="Genomic_DNA"/>
</dbReference>
<dbReference type="PIR" id="D71091">
    <property type="entry name" value="D71091"/>
</dbReference>
<dbReference type="RefSeq" id="WP_010885082.1">
    <property type="nucleotide sequence ID" value="NC_000961.1"/>
</dbReference>
<dbReference type="SMR" id="O58721"/>
<dbReference type="STRING" id="70601.gene:9377949"/>
<dbReference type="EnsemblBacteria" id="BAA30090">
    <property type="protein sequence ID" value="BAA30090"/>
    <property type="gene ID" value="BAA30090"/>
</dbReference>
<dbReference type="GeneID" id="1443317"/>
<dbReference type="KEGG" id="pho:PH0993"/>
<dbReference type="eggNOG" id="arCOG00810">
    <property type="taxonomic scope" value="Archaea"/>
</dbReference>
<dbReference type="OrthoDB" id="371856at2157"/>
<dbReference type="Proteomes" id="UP000000752">
    <property type="component" value="Chromosome"/>
</dbReference>
<dbReference type="GO" id="GO:0005829">
    <property type="term" value="C:cytosol"/>
    <property type="evidence" value="ECO:0007669"/>
    <property type="project" value="TreeGrafter"/>
</dbReference>
<dbReference type="GO" id="GO:0005524">
    <property type="term" value="F:ATP binding"/>
    <property type="evidence" value="ECO:0007669"/>
    <property type="project" value="UniProtKB-UniRule"/>
</dbReference>
<dbReference type="GO" id="GO:0046872">
    <property type="term" value="F:metal ion binding"/>
    <property type="evidence" value="ECO:0007669"/>
    <property type="project" value="UniProtKB-KW"/>
</dbReference>
<dbReference type="GO" id="GO:0004825">
    <property type="term" value="F:methionine-tRNA ligase activity"/>
    <property type="evidence" value="ECO:0007669"/>
    <property type="project" value="UniProtKB-UniRule"/>
</dbReference>
<dbReference type="GO" id="GO:0000049">
    <property type="term" value="F:tRNA binding"/>
    <property type="evidence" value="ECO:0007669"/>
    <property type="project" value="UniProtKB-KW"/>
</dbReference>
<dbReference type="GO" id="GO:0006431">
    <property type="term" value="P:methionyl-tRNA aminoacylation"/>
    <property type="evidence" value="ECO:0007669"/>
    <property type="project" value="UniProtKB-UniRule"/>
</dbReference>
<dbReference type="CDD" id="cd07957">
    <property type="entry name" value="Anticodon_Ia_Met"/>
    <property type="match status" value="1"/>
</dbReference>
<dbReference type="CDD" id="cd00814">
    <property type="entry name" value="MetRS_core"/>
    <property type="match status" value="1"/>
</dbReference>
<dbReference type="CDD" id="cd02798">
    <property type="entry name" value="tRNA_bind_CsaA"/>
    <property type="match status" value="1"/>
</dbReference>
<dbReference type="FunFam" id="2.20.28.20:FF:000001">
    <property type="entry name" value="Methionine--tRNA ligase"/>
    <property type="match status" value="1"/>
</dbReference>
<dbReference type="FunFam" id="2.40.50.140:FF:000042">
    <property type="entry name" value="Methionine--tRNA ligase"/>
    <property type="match status" value="1"/>
</dbReference>
<dbReference type="Gene3D" id="3.40.50.620">
    <property type="entry name" value="HUPs"/>
    <property type="match status" value="1"/>
</dbReference>
<dbReference type="Gene3D" id="1.10.730.10">
    <property type="entry name" value="Isoleucyl-tRNA Synthetase, Domain 1"/>
    <property type="match status" value="1"/>
</dbReference>
<dbReference type="Gene3D" id="2.20.28.20">
    <property type="entry name" value="Methionyl-tRNA synthetase, Zn-domain"/>
    <property type="match status" value="1"/>
</dbReference>
<dbReference type="Gene3D" id="2.40.50.140">
    <property type="entry name" value="Nucleic acid-binding proteins"/>
    <property type="match status" value="1"/>
</dbReference>
<dbReference type="HAMAP" id="MF_00098">
    <property type="entry name" value="Met_tRNA_synth_type1"/>
    <property type="match status" value="1"/>
</dbReference>
<dbReference type="InterPro" id="IPR001412">
    <property type="entry name" value="aa-tRNA-synth_I_CS"/>
</dbReference>
<dbReference type="InterPro" id="IPR041872">
    <property type="entry name" value="Anticodon_Met"/>
</dbReference>
<dbReference type="InterPro" id="IPR004495">
    <property type="entry name" value="Met-tRNA-synth_bsu_C"/>
</dbReference>
<dbReference type="InterPro" id="IPR023458">
    <property type="entry name" value="Met-tRNA_ligase_1"/>
</dbReference>
<dbReference type="InterPro" id="IPR014758">
    <property type="entry name" value="Met-tRNA_synth"/>
</dbReference>
<dbReference type="InterPro" id="IPR015413">
    <property type="entry name" value="Methionyl/Leucyl_tRNA_Synth"/>
</dbReference>
<dbReference type="InterPro" id="IPR033911">
    <property type="entry name" value="MetRS_core"/>
</dbReference>
<dbReference type="InterPro" id="IPR029038">
    <property type="entry name" value="MetRS_Zn"/>
</dbReference>
<dbReference type="InterPro" id="IPR012340">
    <property type="entry name" value="NA-bd_OB-fold"/>
</dbReference>
<dbReference type="InterPro" id="IPR014729">
    <property type="entry name" value="Rossmann-like_a/b/a_fold"/>
</dbReference>
<dbReference type="InterPro" id="IPR002547">
    <property type="entry name" value="tRNA-bd_dom"/>
</dbReference>
<dbReference type="InterPro" id="IPR009080">
    <property type="entry name" value="tRNAsynth_Ia_anticodon-bd"/>
</dbReference>
<dbReference type="NCBIfam" id="TIGR00398">
    <property type="entry name" value="metG"/>
    <property type="match status" value="1"/>
</dbReference>
<dbReference type="NCBIfam" id="TIGR00399">
    <property type="entry name" value="metG_C_term"/>
    <property type="match status" value="1"/>
</dbReference>
<dbReference type="NCBIfam" id="NF001100">
    <property type="entry name" value="PRK00133.1"/>
    <property type="match status" value="1"/>
</dbReference>
<dbReference type="PANTHER" id="PTHR45765">
    <property type="entry name" value="METHIONINE--TRNA LIGASE"/>
    <property type="match status" value="1"/>
</dbReference>
<dbReference type="PANTHER" id="PTHR45765:SF1">
    <property type="entry name" value="METHIONINE--TRNA LIGASE, CYTOPLASMIC"/>
    <property type="match status" value="1"/>
</dbReference>
<dbReference type="Pfam" id="PF19303">
    <property type="entry name" value="Anticodon_3"/>
    <property type="match status" value="1"/>
</dbReference>
<dbReference type="Pfam" id="PF09334">
    <property type="entry name" value="tRNA-synt_1g"/>
    <property type="match status" value="1"/>
</dbReference>
<dbReference type="Pfam" id="PF01588">
    <property type="entry name" value="tRNA_bind"/>
    <property type="match status" value="1"/>
</dbReference>
<dbReference type="PRINTS" id="PR01041">
    <property type="entry name" value="TRNASYNTHMET"/>
</dbReference>
<dbReference type="SUPFAM" id="SSF47323">
    <property type="entry name" value="Anticodon-binding domain of a subclass of class I aminoacyl-tRNA synthetases"/>
    <property type="match status" value="1"/>
</dbReference>
<dbReference type="SUPFAM" id="SSF57770">
    <property type="entry name" value="Methionyl-tRNA synthetase (MetRS), Zn-domain"/>
    <property type="match status" value="1"/>
</dbReference>
<dbReference type="SUPFAM" id="SSF50249">
    <property type="entry name" value="Nucleic acid-binding proteins"/>
    <property type="match status" value="1"/>
</dbReference>
<dbReference type="SUPFAM" id="SSF52374">
    <property type="entry name" value="Nucleotidylyl transferase"/>
    <property type="match status" value="1"/>
</dbReference>
<dbReference type="PROSITE" id="PS00178">
    <property type="entry name" value="AA_TRNA_LIGASE_I"/>
    <property type="match status" value="1"/>
</dbReference>
<dbReference type="PROSITE" id="PS50886">
    <property type="entry name" value="TRBD"/>
    <property type="match status" value="1"/>
</dbReference>
<name>SYM_PYRHO</name>
<accession>O58721</accession>
<protein>
    <recommendedName>
        <fullName evidence="1">Methionine--tRNA ligase</fullName>
        <ecNumber evidence="1">6.1.1.10</ecNumber>
    </recommendedName>
    <alternativeName>
        <fullName evidence="1">Methionyl-tRNA synthetase</fullName>
        <shortName evidence="1">MetRS</shortName>
    </alternativeName>
</protein>
<sequence length="723" mass="84743">MVRYMVTSALPYANGPIHAGHLAGAYLPADIFVRYLRLKGEDVVFICGTDEHGTPISFRALKEGRSPREIVDEFHEHIKITFQRAKISFDFFGRTELPIHYKLSQQFFLKAYENGHLVKKVTKQAYCEHDKMFLPDRFVIGTCPFCGAENQRGDQCEVCGRPLTPEILINPRCALCGRPISFRESAHYYIKMQDFAEKLKRWIENQPWKPNVKNMVLKWIEEGLEERAITRDLNWGIPVPLDEEDMKNKVLYVWFEAPIGYISITMEYFKRLGKPNEWKKYWLNIDSETRVIHFIGKDNIPFHAIFWPAFLMAYGKYKDEEVEAEWNLPYDIPANEYLTLEGKKFSTSRNWAIWVHEFLDVFPADYLRYYLTTIMPETRDSDFSFAEFKTRINEELVNNLGNFVHRAMTFVNRYFDGIVPERGELDELDRQALEEIEKAFEEVGELIMNYRFKDALKRVMELASFGNKYFDHKQPWKTAKEDRARTGTTVNISLQIVKALGILLEPFLPDASEKIWHLLNLDEVKKWKFKELPAGHRVRKAEILFKKVTDEQIIYFILNYMGRNNPEGAKMLLEKYYKREDVIKVAKEKFGEESKIILKRIYKDIKLEEGKEEKEMEYVKFEDFAKLDLRVGKIIEVKDHPNADKLYIVKVDLGKEVRTLVAGLKKYYKPEELLNKYVIIVANLEPKKLRGVESQGMLLAADDGENVALLMPDKEVKLGAKVR</sequence>
<evidence type="ECO:0000255" key="1">
    <source>
        <dbReference type="HAMAP-Rule" id="MF_00098"/>
    </source>
</evidence>
<organism>
    <name type="scientific">Pyrococcus horikoshii (strain ATCC 700860 / DSM 12428 / JCM 9974 / NBRC 100139 / OT-3)</name>
    <dbReference type="NCBI Taxonomy" id="70601"/>
    <lineage>
        <taxon>Archaea</taxon>
        <taxon>Methanobacteriati</taxon>
        <taxon>Methanobacteriota</taxon>
        <taxon>Thermococci</taxon>
        <taxon>Thermococcales</taxon>
        <taxon>Thermococcaceae</taxon>
        <taxon>Pyrococcus</taxon>
    </lineage>
</organism>
<feature type="chain" id="PRO_0000139197" description="Methionine--tRNA ligase">
    <location>
        <begin position="1"/>
        <end position="723"/>
    </location>
</feature>
<feature type="domain" description="tRNA-binding" evidence="1">
    <location>
        <begin position="623"/>
        <end position="723"/>
    </location>
</feature>
<feature type="short sequence motif" description="'HIGH' region">
    <location>
        <begin position="11"/>
        <end position="21"/>
    </location>
</feature>
<feature type="short sequence motif" description="'KMSKS' region">
    <location>
        <begin position="344"/>
        <end position="348"/>
    </location>
</feature>
<feature type="binding site" evidence="1">
    <location>
        <position position="143"/>
    </location>
    <ligand>
        <name>Zn(2+)</name>
        <dbReference type="ChEBI" id="CHEBI:29105"/>
    </ligand>
</feature>
<feature type="binding site" evidence="1">
    <location>
        <position position="146"/>
    </location>
    <ligand>
        <name>Zn(2+)</name>
        <dbReference type="ChEBI" id="CHEBI:29105"/>
    </ligand>
</feature>
<feature type="binding site" evidence="1">
    <location>
        <position position="156"/>
    </location>
    <ligand>
        <name>Zn(2+)</name>
        <dbReference type="ChEBI" id="CHEBI:29105"/>
    </ligand>
</feature>
<feature type="binding site" evidence="1">
    <location>
        <position position="159"/>
    </location>
    <ligand>
        <name>Zn(2+)</name>
        <dbReference type="ChEBI" id="CHEBI:29105"/>
    </ligand>
</feature>
<feature type="binding site" evidence="1">
    <location>
        <position position="347"/>
    </location>
    <ligand>
        <name>ATP</name>
        <dbReference type="ChEBI" id="CHEBI:30616"/>
    </ligand>
</feature>